<organism>
    <name type="scientific">Doryteuthis pealeii</name>
    <name type="common">Longfin inshore squid</name>
    <name type="synonym">Loligo pealeii</name>
    <dbReference type="NCBI Taxonomy" id="1051067"/>
    <lineage>
        <taxon>Eukaryota</taxon>
        <taxon>Metazoa</taxon>
        <taxon>Spiralia</taxon>
        <taxon>Lophotrochozoa</taxon>
        <taxon>Mollusca</taxon>
        <taxon>Cephalopoda</taxon>
        <taxon>Coleoidea</taxon>
        <taxon>Decapodiformes</taxon>
        <taxon>Myopsida</taxon>
        <taxon>Loliginidae</taxon>
        <taxon>Doryteuthis</taxon>
    </lineage>
</organism>
<comment type="function">
    <text evidence="3">Acts as a pheromone. Triggers aggressive behaviors in males such as fin beating, lunging and grabbing. These behaviors form part of the competition for fertile females.</text>
</comment>
<comment type="subcellular location">
    <subcellularLocation>
        <location evidence="3">Secreted</location>
    </subcellularLocation>
</comment>
<comment type="tissue specificity">
    <text evidence="3">Expressed in ciliated epithelium of nidamental gland and in secretory-like cells in accessory nidamental gland (at protein level). Expressed in ovary, nidamental gland and accessory nidamental gland.</text>
</comment>
<comment type="mass spectrometry"/>
<comment type="similarity">
    <text evidence="2">Belongs to the beta-microseminoprotein family.</text>
</comment>
<reference evidence="5 6" key="1">
    <citation type="journal article" date="2011" name="Curr. Biol.">
        <title>Extreme aggression in male squid induced by a beta-MSP-like pheromone.</title>
        <authorList>
            <person name="Cummins S.F."/>
            <person name="Boal J.G."/>
            <person name="Buresch K.C."/>
            <person name="Kuanpradit C."/>
            <person name="Sobhon P."/>
            <person name="Holm J.B."/>
            <person name="Degnan B.M."/>
            <person name="Nagle G.T."/>
            <person name="Hanlon R.T."/>
        </authorList>
    </citation>
    <scope>NUCLEOTIDE SEQUENCE [MRNA]</scope>
    <scope>PROTEIN SEQUENCE OF 1-90</scope>
    <scope>FUNCTION</scope>
    <scope>SUBCELLULAR LOCATION</scope>
    <scope>TISSUE SPECIFICITY</scope>
    <scope>MASS SPECTROMETRY</scope>
    <source>
        <tissue evidence="3">Egg</tissue>
    </source>
</reference>
<protein>
    <recommendedName>
        <fullName evidence="4 6">Beta-microseminoprotein</fullName>
        <shortName evidence="4">Beta-MSP</shortName>
    </recommendedName>
</protein>
<feature type="chain" id="PRO_0000418360" description="Beta-microseminoprotein">
    <location>
        <begin position="1"/>
        <end position="91"/>
    </location>
</feature>
<feature type="disulfide bond" evidence="1">
    <location>
        <begin position="2"/>
        <end position="54"/>
    </location>
</feature>
<feature type="disulfide bond" evidence="1">
    <location>
        <begin position="22"/>
        <end position="46"/>
    </location>
</feature>
<feature type="disulfide bond" evidence="1">
    <location>
        <begin position="41"/>
        <end position="75"/>
    </location>
</feature>
<feature type="disulfide bond" evidence="1">
    <location>
        <begin position="44"/>
        <end position="53"/>
    </location>
</feature>
<feature type="disulfide bond" evidence="1">
    <location>
        <begin position="68"/>
        <end position="88"/>
    </location>
</feature>
<proteinExistence type="evidence at protein level"/>
<keyword id="KW-0085">Behavior</keyword>
<keyword id="KW-0903">Direct protein sequencing</keyword>
<keyword id="KW-1015">Disulfide bond</keyword>
<keyword id="KW-0588">Pheromone</keyword>
<keyword id="KW-0964">Secreted</keyword>
<sequence>SCSRKGPKFVEYKYMAGSAQYCEHKNMKFMIGSNFIDFDDCTRCTCYNHGLQCCGIGANAGVFGVPGCEAVNDHCELVFLKKNTDQLCFIN</sequence>
<dbReference type="EMBL" id="GQ906708">
    <property type="protein sequence ID" value="ADB12451.1"/>
    <property type="molecule type" value="mRNA"/>
</dbReference>
<dbReference type="GO" id="GO:0005576">
    <property type="term" value="C:extracellular region"/>
    <property type="evidence" value="ECO:0007669"/>
    <property type="project" value="UniProtKB-SubCell"/>
</dbReference>
<dbReference type="GO" id="GO:0005186">
    <property type="term" value="F:pheromone activity"/>
    <property type="evidence" value="ECO:0007669"/>
    <property type="project" value="UniProtKB-KW"/>
</dbReference>
<dbReference type="Gene3D" id="2.60.40.1900">
    <property type="entry name" value="Beta-microseminoprotein (PSP94) domain"/>
    <property type="match status" value="1"/>
</dbReference>
<name>MSMB_DORPE</name>
<accession>D2X5V5</accession>
<accession>P86361</accession>
<evidence type="ECO:0000250" key="1">
    <source>
        <dbReference type="UniProtKB" id="P08118"/>
    </source>
</evidence>
<evidence type="ECO:0000255" key="2"/>
<evidence type="ECO:0000269" key="3">
    <source>
    </source>
</evidence>
<evidence type="ECO:0000303" key="4">
    <source>
    </source>
</evidence>
<evidence type="ECO:0000305" key="5"/>
<evidence type="ECO:0000312" key="6">
    <source>
        <dbReference type="EMBL" id="ADB12451.1"/>
    </source>
</evidence>